<keyword id="KW-1003">Cell membrane</keyword>
<keyword id="KW-0342">GTP-binding</keyword>
<keyword id="KW-0378">Hydrolase</keyword>
<keyword id="KW-0472">Membrane</keyword>
<keyword id="KW-0547">Nucleotide-binding</keyword>
<keyword id="KW-0648">Protein biosynthesis</keyword>
<keyword id="KW-1185">Reference proteome</keyword>
<gene>
    <name evidence="1" type="primary">lepA</name>
    <name type="ordered locus">MCCL_1236</name>
</gene>
<sequence length="607" mass="67455">MNNEQRLKRQERIRNFSIIAHIDHGKSTLADRILENTKSVATREMKAQLLDSMDLERERGITIKLNAVQLNYTAKDGETYIFHLIDTPGHVDFTYEVSRSLAACEGAILVVDAAQGIEAQTLANVYLALDNELELIPVINKIDLPAAEPERVRQEIEDVIGLDASDAVLASAKANIGIEDILEQIVELVPPPMGDPEAPLKALIFDSAFDAYRGVISSIRIIDGTVKAGDKIKMMATGKEFEVVEVGINTPKQMPVAELTVGDVGYLTASIKNVGDSRVGDTITHASNPASEPLQGYKKMNPMVFCGVYPIDTGKYNDLREALEKLQLNDASLEFEPETSQALGFGFRVGFLGLLHMEIIQERIEREFGIELIATAPSVIYKCEMTDGSEVVVDNPSKMPDPQKIDKIYEPYVKASIMVPNDYVGAVMELCQKKRGNFQTMDYLDDIRVNIIYEVPLSEVVFDFFDQLKSSTKGYASFDYELIGYQESKLVKMDILLNGETVDALSFIVHRDFAYDRGKVIVEKLKTLIPRQQFEVPVQAAIGQKIIARTNIKSIGKNVLAKCYGGDISRKRKLLEKQKAGKAKMKSVGSVEIPQDAFLAVLKMDEE</sequence>
<feature type="chain" id="PRO_1000190816" description="Elongation factor 4">
    <location>
        <begin position="1"/>
        <end position="607"/>
    </location>
</feature>
<feature type="domain" description="tr-type G">
    <location>
        <begin position="11"/>
        <end position="193"/>
    </location>
</feature>
<feature type="binding site" evidence="1">
    <location>
        <begin position="23"/>
        <end position="28"/>
    </location>
    <ligand>
        <name>GTP</name>
        <dbReference type="ChEBI" id="CHEBI:37565"/>
    </ligand>
</feature>
<feature type="binding site" evidence="1">
    <location>
        <begin position="140"/>
        <end position="143"/>
    </location>
    <ligand>
        <name>GTP</name>
        <dbReference type="ChEBI" id="CHEBI:37565"/>
    </ligand>
</feature>
<protein>
    <recommendedName>
        <fullName evidence="1">Elongation factor 4</fullName>
        <shortName evidence="1">EF-4</shortName>
        <ecNumber evidence="1">3.6.5.n1</ecNumber>
    </recommendedName>
    <alternativeName>
        <fullName evidence="1">Ribosomal back-translocase LepA</fullName>
    </alternativeName>
</protein>
<comment type="function">
    <text evidence="1">Required for accurate and efficient protein synthesis under certain stress conditions. May act as a fidelity factor of the translation reaction, by catalyzing a one-codon backward translocation of tRNAs on improperly translocated ribosomes. Back-translocation proceeds from a post-translocation (POST) complex to a pre-translocation (PRE) complex, thus giving elongation factor G a second chance to translocate the tRNAs correctly. Binds to ribosomes in a GTP-dependent manner.</text>
</comment>
<comment type="catalytic activity">
    <reaction evidence="1">
        <text>GTP + H2O = GDP + phosphate + H(+)</text>
        <dbReference type="Rhea" id="RHEA:19669"/>
        <dbReference type="ChEBI" id="CHEBI:15377"/>
        <dbReference type="ChEBI" id="CHEBI:15378"/>
        <dbReference type="ChEBI" id="CHEBI:37565"/>
        <dbReference type="ChEBI" id="CHEBI:43474"/>
        <dbReference type="ChEBI" id="CHEBI:58189"/>
        <dbReference type="EC" id="3.6.5.n1"/>
    </reaction>
</comment>
<comment type="subcellular location">
    <subcellularLocation>
        <location evidence="1">Cell membrane</location>
        <topology evidence="1">Peripheral membrane protein</topology>
        <orientation evidence="1">Cytoplasmic side</orientation>
    </subcellularLocation>
</comment>
<comment type="similarity">
    <text evidence="1">Belongs to the TRAFAC class translation factor GTPase superfamily. Classic translation factor GTPase family. LepA subfamily.</text>
</comment>
<dbReference type="EC" id="3.6.5.n1" evidence="1"/>
<dbReference type="EMBL" id="AP009484">
    <property type="protein sequence ID" value="BAH17943.1"/>
    <property type="molecule type" value="Genomic_DNA"/>
</dbReference>
<dbReference type="RefSeq" id="WP_012657141.1">
    <property type="nucleotide sequence ID" value="NC_011999.1"/>
</dbReference>
<dbReference type="SMR" id="B9E6X5"/>
<dbReference type="STRING" id="458233.MCCL_1236"/>
<dbReference type="KEGG" id="mcl:MCCL_1236"/>
<dbReference type="eggNOG" id="COG0481">
    <property type="taxonomic scope" value="Bacteria"/>
</dbReference>
<dbReference type="HOGENOM" id="CLU_009995_3_3_9"/>
<dbReference type="OrthoDB" id="9801591at2"/>
<dbReference type="Proteomes" id="UP000001383">
    <property type="component" value="Chromosome"/>
</dbReference>
<dbReference type="GO" id="GO:0005886">
    <property type="term" value="C:plasma membrane"/>
    <property type="evidence" value="ECO:0007669"/>
    <property type="project" value="UniProtKB-SubCell"/>
</dbReference>
<dbReference type="GO" id="GO:0005525">
    <property type="term" value="F:GTP binding"/>
    <property type="evidence" value="ECO:0007669"/>
    <property type="project" value="UniProtKB-UniRule"/>
</dbReference>
<dbReference type="GO" id="GO:0003924">
    <property type="term" value="F:GTPase activity"/>
    <property type="evidence" value="ECO:0007669"/>
    <property type="project" value="UniProtKB-UniRule"/>
</dbReference>
<dbReference type="GO" id="GO:0043022">
    <property type="term" value="F:ribosome binding"/>
    <property type="evidence" value="ECO:0007669"/>
    <property type="project" value="UniProtKB-UniRule"/>
</dbReference>
<dbReference type="GO" id="GO:0003746">
    <property type="term" value="F:translation elongation factor activity"/>
    <property type="evidence" value="ECO:0007669"/>
    <property type="project" value="UniProtKB-UniRule"/>
</dbReference>
<dbReference type="GO" id="GO:0045727">
    <property type="term" value="P:positive regulation of translation"/>
    <property type="evidence" value="ECO:0007669"/>
    <property type="project" value="UniProtKB-UniRule"/>
</dbReference>
<dbReference type="CDD" id="cd03699">
    <property type="entry name" value="EF4_II"/>
    <property type="match status" value="1"/>
</dbReference>
<dbReference type="CDD" id="cd16260">
    <property type="entry name" value="EF4_III"/>
    <property type="match status" value="1"/>
</dbReference>
<dbReference type="CDD" id="cd01890">
    <property type="entry name" value="LepA"/>
    <property type="match status" value="1"/>
</dbReference>
<dbReference type="CDD" id="cd03709">
    <property type="entry name" value="lepA_C"/>
    <property type="match status" value="1"/>
</dbReference>
<dbReference type="FunFam" id="3.40.50.300:FF:000078">
    <property type="entry name" value="Elongation factor 4"/>
    <property type="match status" value="1"/>
</dbReference>
<dbReference type="FunFam" id="2.40.30.10:FF:000015">
    <property type="entry name" value="Translation factor GUF1, mitochondrial"/>
    <property type="match status" value="1"/>
</dbReference>
<dbReference type="FunFam" id="3.30.70.240:FF:000007">
    <property type="entry name" value="Translation factor GUF1, mitochondrial"/>
    <property type="match status" value="1"/>
</dbReference>
<dbReference type="FunFam" id="3.30.70.2570:FF:000001">
    <property type="entry name" value="Translation factor GUF1, mitochondrial"/>
    <property type="match status" value="1"/>
</dbReference>
<dbReference type="FunFam" id="3.30.70.870:FF:000004">
    <property type="entry name" value="Translation factor GUF1, mitochondrial"/>
    <property type="match status" value="1"/>
</dbReference>
<dbReference type="Gene3D" id="3.30.70.240">
    <property type="match status" value="1"/>
</dbReference>
<dbReference type="Gene3D" id="3.30.70.2570">
    <property type="entry name" value="Elongation factor 4, C-terminal domain"/>
    <property type="match status" value="1"/>
</dbReference>
<dbReference type="Gene3D" id="3.30.70.870">
    <property type="entry name" value="Elongation Factor G (Translational Gtpase), domain 3"/>
    <property type="match status" value="1"/>
</dbReference>
<dbReference type="Gene3D" id="3.40.50.300">
    <property type="entry name" value="P-loop containing nucleotide triphosphate hydrolases"/>
    <property type="match status" value="1"/>
</dbReference>
<dbReference type="Gene3D" id="2.40.30.10">
    <property type="entry name" value="Translation factors"/>
    <property type="match status" value="1"/>
</dbReference>
<dbReference type="HAMAP" id="MF_00071">
    <property type="entry name" value="LepA"/>
    <property type="match status" value="1"/>
</dbReference>
<dbReference type="InterPro" id="IPR006297">
    <property type="entry name" value="EF-4"/>
</dbReference>
<dbReference type="InterPro" id="IPR041095">
    <property type="entry name" value="EFG_II"/>
</dbReference>
<dbReference type="InterPro" id="IPR035647">
    <property type="entry name" value="EFG_III/V"/>
</dbReference>
<dbReference type="InterPro" id="IPR000640">
    <property type="entry name" value="EFG_V-like"/>
</dbReference>
<dbReference type="InterPro" id="IPR004161">
    <property type="entry name" value="EFTu-like_2"/>
</dbReference>
<dbReference type="InterPro" id="IPR031157">
    <property type="entry name" value="G_TR_CS"/>
</dbReference>
<dbReference type="InterPro" id="IPR038363">
    <property type="entry name" value="LepA_C_sf"/>
</dbReference>
<dbReference type="InterPro" id="IPR013842">
    <property type="entry name" value="LepA_CTD"/>
</dbReference>
<dbReference type="InterPro" id="IPR035654">
    <property type="entry name" value="LepA_IV"/>
</dbReference>
<dbReference type="InterPro" id="IPR027417">
    <property type="entry name" value="P-loop_NTPase"/>
</dbReference>
<dbReference type="InterPro" id="IPR005225">
    <property type="entry name" value="Small_GTP-bd"/>
</dbReference>
<dbReference type="InterPro" id="IPR000795">
    <property type="entry name" value="T_Tr_GTP-bd_dom"/>
</dbReference>
<dbReference type="NCBIfam" id="TIGR01393">
    <property type="entry name" value="lepA"/>
    <property type="match status" value="1"/>
</dbReference>
<dbReference type="NCBIfam" id="TIGR00231">
    <property type="entry name" value="small_GTP"/>
    <property type="match status" value="1"/>
</dbReference>
<dbReference type="PANTHER" id="PTHR43512:SF4">
    <property type="entry name" value="TRANSLATION FACTOR GUF1 HOMOLOG, CHLOROPLASTIC"/>
    <property type="match status" value="1"/>
</dbReference>
<dbReference type="PANTHER" id="PTHR43512">
    <property type="entry name" value="TRANSLATION FACTOR GUF1-RELATED"/>
    <property type="match status" value="1"/>
</dbReference>
<dbReference type="Pfam" id="PF00679">
    <property type="entry name" value="EFG_C"/>
    <property type="match status" value="1"/>
</dbReference>
<dbReference type="Pfam" id="PF14492">
    <property type="entry name" value="EFG_III"/>
    <property type="match status" value="1"/>
</dbReference>
<dbReference type="Pfam" id="PF00009">
    <property type="entry name" value="GTP_EFTU"/>
    <property type="match status" value="1"/>
</dbReference>
<dbReference type="Pfam" id="PF03144">
    <property type="entry name" value="GTP_EFTU_D2"/>
    <property type="match status" value="1"/>
</dbReference>
<dbReference type="Pfam" id="PF06421">
    <property type="entry name" value="LepA_C"/>
    <property type="match status" value="1"/>
</dbReference>
<dbReference type="PRINTS" id="PR00315">
    <property type="entry name" value="ELONGATNFCT"/>
</dbReference>
<dbReference type="SMART" id="SM00838">
    <property type="entry name" value="EFG_C"/>
    <property type="match status" value="1"/>
</dbReference>
<dbReference type="SUPFAM" id="SSF54980">
    <property type="entry name" value="EF-G C-terminal domain-like"/>
    <property type="match status" value="2"/>
</dbReference>
<dbReference type="SUPFAM" id="SSF52540">
    <property type="entry name" value="P-loop containing nucleoside triphosphate hydrolases"/>
    <property type="match status" value="1"/>
</dbReference>
<dbReference type="PROSITE" id="PS00301">
    <property type="entry name" value="G_TR_1"/>
    <property type="match status" value="1"/>
</dbReference>
<dbReference type="PROSITE" id="PS51722">
    <property type="entry name" value="G_TR_2"/>
    <property type="match status" value="1"/>
</dbReference>
<organism>
    <name type="scientific">Macrococcus caseolyticus (strain JCSC5402)</name>
    <name type="common">Macrococcoides caseolyticum</name>
    <dbReference type="NCBI Taxonomy" id="458233"/>
    <lineage>
        <taxon>Bacteria</taxon>
        <taxon>Bacillati</taxon>
        <taxon>Bacillota</taxon>
        <taxon>Bacilli</taxon>
        <taxon>Bacillales</taxon>
        <taxon>Staphylococcaceae</taxon>
        <taxon>Macrococcoides</taxon>
    </lineage>
</organism>
<evidence type="ECO:0000255" key="1">
    <source>
        <dbReference type="HAMAP-Rule" id="MF_00071"/>
    </source>
</evidence>
<accession>B9E6X5</accession>
<name>LEPA_MACCJ</name>
<proteinExistence type="inferred from homology"/>
<reference key="1">
    <citation type="journal article" date="2009" name="J. Bacteriol.">
        <title>Complete genome sequence of Macrococcus caseolyticus strain JCSCS5402, reflecting the ancestral genome of the human-pathogenic staphylococci.</title>
        <authorList>
            <person name="Baba T."/>
            <person name="Kuwahara-Arai K."/>
            <person name="Uchiyama I."/>
            <person name="Takeuchi F."/>
            <person name="Ito T."/>
            <person name="Hiramatsu K."/>
        </authorList>
    </citation>
    <scope>NUCLEOTIDE SEQUENCE [LARGE SCALE GENOMIC DNA]</scope>
    <source>
        <strain>JCSC5402</strain>
    </source>
</reference>